<feature type="chain" id="PRO_1000188408" description="Nucleoid occlusion factor SlmA">
    <location>
        <begin position="1"/>
        <end position="198"/>
    </location>
</feature>
<feature type="domain" description="HTH tetR-type" evidence="1">
    <location>
        <begin position="9"/>
        <end position="70"/>
    </location>
</feature>
<feature type="DNA-binding region" description="H-T-H motif" evidence="1">
    <location>
        <begin position="33"/>
        <end position="52"/>
    </location>
</feature>
<feature type="coiled-coil region" evidence="1">
    <location>
        <begin position="119"/>
        <end position="144"/>
    </location>
</feature>
<reference key="1">
    <citation type="submission" date="2008-04" db="EMBL/GenBank/DDBJ databases">
        <title>Complete sequence of Yersinia pseudotuberculosis PB1/+.</title>
        <authorList>
            <person name="Copeland A."/>
            <person name="Lucas S."/>
            <person name="Lapidus A."/>
            <person name="Glavina del Rio T."/>
            <person name="Dalin E."/>
            <person name="Tice H."/>
            <person name="Bruce D."/>
            <person name="Goodwin L."/>
            <person name="Pitluck S."/>
            <person name="Munk A.C."/>
            <person name="Brettin T."/>
            <person name="Detter J.C."/>
            <person name="Han C."/>
            <person name="Tapia R."/>
            <person name="Schmutz J."/>
            <person name="Larimer F."/>
            <person name="Land M."/>
            <person name="Hauser L."/>
            <person name="Challacombe J.F."/>
            <person name="Green L."/>
            <person name="Lindler L.E."/>
            <person name="Nikolich M.P."/>
            <person name="Richardson P."/>
        </authorList>
    </citation>
    <scope>NUCLEOTIDE SEQUENCE [LARGE SCALE GENOMIC DNA]</scope>
    <source>
        <strain>PB1/+</strain>
    </source>
</reference>
<keyword id="KW-0131">Cell cycle</keyword>
<keyword id="KW-0132">Cell division</keyword>
<keyword id="KW-0175">Coiled coil</keyword>
<keyword id="KW-0963">Cytoplasm</keyword>
<keyword id="KW-0238">DNA-binding</keyword>
<sequence length="198" mass="23107">MAEKENTKRNRREEILQALAQMLESSDGSQRITTAKLAANVGVSEAALYRHFPSKTRMFDSLIEFIEDSLMSRINLILQDEKETFNRLRLILLLVLGFAERNPGLTRIMTGHALMFEQDRLQGRINQLFERIEMQLRQVLREKKLRDGQGFIHDEALLATQLLAFCEGMLSRFVRSEFRYCPTQEFDSRWPLIVAQLQ</sequence>
<name>SLMA_YERPB</name>
<organism>
    <name type="scientific">Yersinia pseudotuberculosis serotype IB (strain PB1/+)</name>
    <dbReference type="NCBI Taxonomy" id="502801"/>
    <lineage>
        <taxon>Bacteria</taxon>
        <taxon>Pseudomonadati</taxon>
        <taxon>Pseudomonadota</taxon>
        <taxon>Gammaproteobacteria</taxon>
        <taxon>Enterobacterales</taxon>
        <taxon>Yersiniaceae</taxon>
        <taxon>Yersinia</taxon>
    </lineage>
</organism>
<dbReference type="EMBL" id="CP001048">
    <property type="protein sequence ID" value="ACC87044.1"/>
    <property type="molecule type" value="Genomic_DNA"/>
</dbReference>
<dbReference type="RefSeq" id="WP_002208995.1">
    <property type="nucleotide sequence ID" value="NZ_CP009780.1"/>
</dbReference>
<dbReference type="SMR" id="B2JYN0"/>
<dbReference type="GeneID" id="96663527"/>
<dbReference type="KEGG" id="ypb:YPTS_0045"/>
<dbReference type="PATRIC" id="fig|502801.10.peg.3721"/>
<dbReference type="GO" id="GO:0043590">
    <property type="term" value="C:bacterial nucleoid"/>
    <property type="evidence" value="ECO:0007669"/>
    <property type="project" value="UniProtKB-UniRule"/>
</dbReference>
<dbReference type="GO" id="GO:0005737">
    <property type="term" value="C:cytoplasm"/>
    <property type="evidence" value="ECO:0007669"/>
    <property type="project" value="UniProtKB-UniRule"/>
</dbReference>
<dbReference type="GO" id="GO:0003700">
    <property type="term" value="F:DNA-binding transcription factor activity"/>
    <property type="evidence" value="ECO:0007669"/>
    <property type="project" value="TreeGrafter"/>
</dbReference>
<dbReference type="GO" id="GO:0000976">
    <property type="term" value="F:transcription cis-regulatory region binding"/>
    <property type="evidence" value="ECO:0007669"/>
    <property type="project" value="TreeGrafter"/>
</dbReference>
<dbReference type="GO" id="GO:0051301">
    <property type="term" value="P:cell division"/>
    <property type="evidence" value="ECO:0007669"/>
    <property type="project" value="UniProtKB-KW"/>
</dbReference>
<dbReference type="GO" id="GO:0010974">
    <property type="term" value="P:negative regulation of division septum assembly"/>
    <property type="evidence" value="ECO:0007669"/>
    <property type="project" value="InterPro"/>
</dbReference>
<dbReference type="FunFam" id="1.10.357.10:FF:000002">
    <property type="entry name" value="Nucleoid occlusion factor SlmA"/>
    <property type="match status" value="1"/>
</dbReference>
<dbReference type="Gene3D" id="1.10.357.10">
    <property type="entry name" value="Tetracycline Repressor, domain 2"/>
    <property type="match status" value="1"/>
</dbReference>
<dbReference type="HAMAP" id="MF_01839">
    <property type="entry name" value="NO_factor_SlmA"/>
    <property type="match status" value="1"/>
</dbReference>
<dbReference type="InterPro" id="IPR023772">
    <property type="entry name" value="DNA-bd_HTH_TetR-type_CS"/>
</dbReference>
<dbReference type="InterPro" id="IPR009057">
    <property type="entry name" value="Homeodomain-like_sf"/>
</dbReference>
<dbReference type="InterPro" id="IPR050109">
    <property type="entry name" value="HTH-type_TetR-like_transc_reg"/>
</dbReference>
<dbReference type="InterPro" id="IPR001647">
    <property type="entry name" value="HTH_TetR"/>
</dbReference>
<dbReference type="InterPro" id="IPR023769">
    <property type="entry name" value="NO_SlmA"/>
</dbReference>
<dbReference type="InterPro" id="IPR054580">
    <property type="entry name" value="SlmA-like_C"/>
</dbReference>
<dbReference type="InterPro" id="IPR036271">
    <property type="entry name" value="Tet_transcr_reg_TetR-rel_C_sf"/>
</dbReference>
<dbReference type="NCBIfam" id="NF007015">
    <property type="entry name" value="PRK09480.1"/>
    <property type="match status" value="1"/>
</dbReference>
<dbReference type="PANTHER" id="PTHR30055">
    <property type="entry name" value="HTH-TYPE TRANSCRIPTIONAL REGULATOR RUTR"/>
    <property type="match status" value="1"/>
</dbReference>
<dbReference type="PANTHER" id="PTHR30055:SF183">
    <property type="entry name" value="NUCLEOID OCCLUSION FACTOR SLMA"/>
    <property type="match status" value="1"/>
</dbReference>
<dbReference type="Pfam" id="PF22276">
    <property type="entry name" value="SlmA-like_C"/>
    <property type="match status" value="1"/>
</dbReference>
<dbReference type="Pfam" id="PF00440">
    <property type="entry name" value="TetR_N"/>
    <property type="match status" value="1"/>
</dbReference>
<dbReference type="SUPFAM" id="SSF46689">
    <property type="entry name" value="Homeodomain-like"/>
    <property type="match status" value="1"/>
</dbReference>
<dbReference type="SUPFAM" id="SSF48498">
    <property type="entry name" value="Tetracyclin repressor-like, C-terminal domain"/>
    <property type="match status" value="1"/>
</dbReference>
<dbReference type="PROSITE" id="PS01081">
    <property type="entry name" value="HTH_TETR_1"/>
    <property type="match status" value="1"/>
</dbReference>
<dbReference type="PROSITE" id="PS50977">
    <property type="entry name" value="HTH_TETR_2"/>
    <property type="match status" value="1"/>
</dbReference>
<comment type="function">
    <text evidence="1">Required for nucleoid occlusion (NO) phenomenon, which prevents Z-ring formation and cell division over the nucleoid. Acts as a DNA-associated cell division inhibitor that binds simultaneously chromosomal DNA and FtsZ, and disrupts the assembly of FtsZ polymers. SlmA-DNA-binding sequences (SBS) are dispersed on non-Ter regions of the chromosome, preventing FtsZ polymerization at these regions.</text>
</comment>
<comment type="subunit">
    <text evidence="1">Homodimer. Interacts with FtsZ.</text>
</comment>
<comment type="subcellular location">
    <subcellularLocation>
        <location evidence="1">Cytoplasm</location>
        <location evidence="1">Nucleoid</location>
    </subcellularLocation>
</comment>
<comment type="similarity">
    <text evidence="1">Belongs to the nucleoid occlusion factor SlmA family.</text>
</comment>
<accession>B2JYN0</accession>
<evidence type="ECO:0000255" key="1">
    <source>
        <dbReference type="HAMAP-Rule" id="MF_01839"/>
    </source>
</evidence>
<proteinExistence type="inferred from homology"/>
<gene>
    <name evidence="1" type="primary">slmA</name>
    <name type="ordered locus">YPTS_0045</name>
</gene>
<protein>
    <recommendedName>
        <fullName evidence="1">Nucleoid occlusion factor SlmA</fullName>
    </recommendedName>
</protein>